<comment type="function">
    <text evidence="1">Hemocyanins are copper-containing oxygen carriers occurring freely dissolved in the hemolymph of many mollusks and arthropods.</text>
</comment>
<comment type="subcellular location">
    <subcellularLocation>
        <location evidence="1">Secreted</location>
        <location evidence="1">Extracellular space</location>
    </subcellularLocation>
</comment>
<comment type="tissue specificity">
    <text evidence="2">Hemolymph.</text>
</comment>
<comment type="similarity">
    <text evidence="4">Belongs to the tyrosinase family. Hemocyanin subfamily.</text>
</comment>
<feature type="chain" id="PRO_0000204279" description="Hemocyanin subunit 2">
    <location>
        <begin position="1"/>
        <end position="12" status="greater than"/>
    </location>
</feature>
<feature type="non-terminal residue" evidence="3">
    <location>
        <position position="12"/>
    </location>
</feature>
<reference evidence="4" key="1">
    <citation type="journal article" date="2007" name="Mar. Biol.">
        <title>Structural and functional heterogeneity of hemocyanin: intra- and inter-specific comparison in four species of portunid crabs (Crustacea: Portunidae).</title>
        <authorList>
            <person name="Giomi F."/>
            <person name="Raicevich S."/>
            <person name="Ferrarese A."/>
            <person name="Pranovi F."/>
            <person name="Di Muro P."/>
            <person name="Beltramin K."/>
        </authorList>
    </citation>
    <scope>PROTEIN SEQUENCE</scope>
    <scope>TISSUE SPECIFICITY</scope>
    <source>
        <tissue evidence="2">Hemolymph</tissue>
    </source>
</reference>
<proteinExistence type="evidence at protein level"/>
<organism>
    <name type="scientific">Liocarcinus depurator</name>
    <name type="common">Harbour crab</name>
    <name type="synonym">Portunus depurator</name>
    <dbReference type="NCBI Taxonomy" id="313354"/>
    <lineage>
        <taxon>Eukaryota</taxon>
        <taxon>Metazoa</taxon>
        <taxon>Ecdysozoa</taxon>
        <taxon>Arthropoda</taxon>
        <taxon>Crustacea</taxon>
        <taxon>Multicrustacea</taxon>
        <taxon>Malacostraca</taxon>
        <taxon>Eumalacostraca</taxon>
        <taxon>Eucarida</taxon>
        <taxon>Decapoda</taxon>
        <taxon>Pleocyemata</taxon>
        <taxon>Brachyura</taxon>
        <taxon>Eubrachyura</taxon>
        <taxon>Portunoidea</taxon>
        <taxon>Polybiidae</taxon>
        <taxon>Liocarcinus</taxon>
    </lineage>
</organism>
<protein>
    <recommendedName>
        <fullName>Hemocyanin subunit 2</fullName>
    </recommendedName>
</protein>
<keyword id="KW-0186">Copper</keyword>
<keyword id="KW-0903">Direct protein sequencing</keyword>
<keyword id="KW-0561">Oxygen transport</keyword>
<keyword id="KW-0964">Secreted</keyword>
<keyword id="KW-0813">Transport</keyword>
<name>HCY2_LIODE</name>
<sequence length="12" mass="1144">DAPGGASDAQKQ</sequence>
<dbReference type="GO" id="GO:0005615">
    <property type="term" value="C:extracellular space"/>
    <property type="evidence" value="ECO:0000314"/>
    <property type="project" value="UniProtKB"/>
</dbReference>
<dbReference type="GO" id="GO:0005344">
    <property type="term" value="F:oxygen carrier activity"/>
    <property type="evidence" value="ECO:0007669"/>
    <property type="project" value="UniProtKB-KW"/>
</dbReference>
<accession>P84462</accession>
<evidence type="ECO:0000250" key="1">
    <source>
        <dbReference type="UniProtKB" id="P84293"/>
    </source>
</evidence>
<evidence type="ECO:0000269" key="2">
    <source ref="1"/>
</evidence>
<evidence type="ECO:0000303" key="3">
    <source ref="1"/>
</evidence>
<evidence type="ECO:0000305" key="4"/>